<keyword id="KW-0479">Metal-binding</keyword>
<keyword id="KW-0539">Nucleus</keyword>
<keyword id="KW-1185">Reference proteome</keyword>
<keyword id="KW-0677">Repeat</keyword>
<keyword id="KW-0862">Zinc</keyword>
<keyword id="KW-0863">Zinc-finger</keyword>
<sequence length="330" mass="36619">MEARCDFCGTEKALIYCKSDSAKLCLNCDVNVHSANPLSQRHTRSLLCEKCSLQPTAVHCMNENVSLCQGCQWTASNCTGLGHRLQSLNPYSDCPSPSDFGKIWSSTLEPSVTSLVSPFSDTLLQELDDWNGSSTSVVTQTQNLKDYSSFFPMESNLPKVIEEECSGLDLCEGINLDDAPLNFNASNDIIGCSSLDNTKCYEYEDSFKEENNIGLPSLLLPTLSGNVVPNMSLSMSNLTGESNATDYQDCGISPGFLIGDSPWESNVEVSFNPKLRDEAKKRYKQKKSKRMFGKQIRYASRKARADTRKRVKGRFVKSGETFEYDPSLVM</sequence>
<comment type="interaction">
    <interactant intactId="EBI-15191913">
        <id>O23379</id>
    </interactant>
    <interactant intactId="EBI-15192709">
        <id>Q6NLH4</id>
        <label>BBX29</label>
    </interactant>
    <organismsDiffer>false</organismsDiffer>
    <experiments>3</experiments>
</comment>
<comment type="interaction">
    <interactant intactId="EBI-15191913">
        <id>O23379</id>
    </interactant>
    <interactant intactId="EBI-15191905">
        <id>Q1G3I2</id>
        <label>MIP1A</label>
    </interactant>
    <organismsDiffer>false</organismsDiffer>
    <experiments>3</experiments>
</comment>
<comment type="interaction">
    <interactant intactId="EBI-15191913">
        <id>O23379</id>
    </interactant>
    <interactant intactId="EBI-15191571">
        <id>Q4PSE2</id>
        <label>NFYC8</label>
    </interactant>
    <organismsDiffer>false</organismsDiffer>
    <experiments>3</experiments>
</comment>
<comment type="subcellular location">
    <subcellularLocation>
        <location evidence="2">Nucleus</location>
    </subcellularLocation>
</comment>
<comment type="similarity">
    <text evidence="3">Belongs to the CONSTANS family.</text>
</comment>
<comment type="sequence caution" evidence="3">
    <conflict type="erroneous gene model prediction">
        <sequence resource="EMBL-CDS" id="CAB10304"/>
    </conflict>
</comment>
<comment type="sequence caution" evidence="3">
    <conflict type="erroneous gene model prediction">
        <sequence resource="EMBL-CDS" id="CAB78567"/>
    </conflict>
</comment>
<gene>
    <name type="primary">COL11</name>
    <name type="ordered locus">At4g15250</name>
    <name type="ORF">dl3670c</name>
</gene>
<dbReference type="EMBL" id="Z97338">
    <property type="protein sequence ID" value="CAB10304.1"/>
    <property type="status" value="ALT_SEQ"/>
    <property type="molecule type" value="Genomic_DNA"/>
</dbReference>
<dbReference type="EMBL" id="AL161541">
    <property type="protein sequence ID" value="CAB78567.1"/>
    <property type="status" value="ALT_SEQ"/>
    <property type="molecule type" value="Genomic_DNA"/>
</dbReference>
<dbReference type="EMBL" id="CP002687">
    <property type="protein sequence ID" value="AEE83577.1"/>
    <property type="molecule type" value="Genomic_DNA"/>
</dbReference>
<dbReference type="PIR" id="F71416">
    <property type="entry name" value="F71416"/>
</dbReference>
<dbReference type="SMR" id="O23379"/>
<dbReference type="BioGRID" id="12488">
    <property type="interactions" value="96"/>
</dbReference>
<dbReference type="IntAct" id="O23379">
    <property type="interactions" value="93"/>
</dbReference>
<dbReference type="STRING" id="3702.O23379"/>
<dbReference type="PaxDb" id="3702-AT4G15250.1"/>
<dbReference type="EnsemblPlants" id="AT4G15250.1">
    <property type="protein sequence ID" value="AT4G15250.1"/>
    <property type="gene ID" value="AT4G15250"/>
</dbReference>
<dbReference type="GeneID" id="827191"/>
<dbReference type="Gramene" id="AT4G15250.1">
    <property type="protein sequence ID" value="AT4G15250.1"/>
    <property type="gene ID" value="AT4G15250"/>
</dbReference>
<dbReference type="KEGG" id="ath:AT4G15250"/>
<dbReference type="Araport" id="AT4G15250"/>
<dbReference type="TAIR" id="AT4G15250">
    <property type="gene designation" value="BBX9"/>
</dbReference>
<dbReference type="eggNOG" id="ENOG502QSHH">
    <property type="taxonomic scope" value="Eukaryota"/>
</dbReference>
<dbReference type="HOGENOM" id="CLU_028225_0_1_1"/>
<dbReference type="InParanoid" id="O23379"/>
<dbReference type="OMA" id="MEARCDY"/>
<dbReference type="PhylomeDB" id="O23379"/>
<dbReference type="PRO" id="PR:O23379"/>
<dbReference type="Proteomes" id="UP000006548">
    <property type="component" value="Chromosome 4"/>
</dbReference>
<dbReference type="ExpressionAtlas" id="O23379">
    <property type="expression patterns" value="baseline and differential"/>
</dbReference>
<dbReference type="GO" id="GO:0005634">
    <property type="term" value="C:nucleus"/>
    <property type="evidence" value="ECO:0007669"/>
    <property type="project" value="UniProtKB-SubCell"/>
</dbReference>
<dbReference type="GO" id="GO:0003700">
    <property type="term" value="F:DNA-binding transcription factor activity"/>
    <property type="evidence" value="ECO:0000250"/>
    <property type="project" value="TAIR"/>
</dbReference>
<dbReference type="GO" id="GO:0008270">
    <property type="term" value="F:zinc ion binding"/>
    <property type="evidence" value="ECO:0007669"/>
    <property type="project" value="UniProtKB-KW"/>
</dbReference>
<dbReference type="CDD" id="cd19821">
    <property type="entry name" value="Bbox1_BBX-like"/>
    <property type="match status" value="1"/>
</dbReference>
<dbReference type="InterPro" id="IPR010402">
    <property type="entry name" value="CCT_domain"/>
</dbReference>
<dbReference type="InterPro" id="IPR049808">
    <property type="entry name" value="CONSTANS-like_Bbox1"/>
</dbReference>
<dbReference type="InterPro" id="IPR000315">
    <property type="entry name" value="Znf_B-box"/>
</dbReference>
<dbReference type="PANTHER" id="PTHR31717:SF46">
    <property type="entry name" value="CCT MOTIF FAMILY PROTEIN-RELATED"/>
    <property type="match status" value="1"/>
</dbReference>
<dbReference type="PANTHER" id="PTHR31717">
    <property type="entry name" value="ZINC FINGER PROTEIN CONSTANS-LIKE 10"/>
    <property type="match status" value="1"/>
</dbReference>
<dbReference type="Pfam" id="PF06203">
    <property type="entry name" value="CCT"/>
    <property type="match status" value="1"/>
</dbReference>
<dbReference type="Pfam" id="PF00643">
    <property type="entry name" value="zf-B_box"/>
    <property type="match status" value="1"/>
</dbReference>
<dbReference type="SMART" id="SM00336">
    <property type="entry name" value="BBOX"/>
    <property type="match status" value="1"/>
</dbReference>
<dbReference type="PROSITE" id="PS51017">
    <property type="entry name" value="CCT"/>
    <property type="match status" value="1"/>
</dbReference>
<dbReference type="PROSITE" id="PS50119">
    <property type="entry name" value="ZF_BBOX"/>
    <property type="match status" value="2"/>
</dbReference>
<protein>
    <recommendedName>
        <fullName>Putative zinc finger protein CONSTANS-LIKE 11</fullName>
    </recommendedName>
</protein>
<evidence type="ECO:0000255" key="1">
    <source>
        <dbReference type="PROSITE-ProRule" id="PRU00024"/>
    </source>
</evidence>
<evidence type="ECO:0000255" key="2">
    <source>
        <dbReference type="PROSITE-ProRule" id="PRU00357"/>
    </source>
</evidence>
<evidence type="ECO:0000305" key="3"/>
<feature type="chain" id="PRO_0000113288" description="Putative zinc finger protein CONSTANS-LIKE 11">
    <location>
        <begin position="1"/>
        <end position="330"/>
    </location>
</feature>
<feature type="domain" description="CCT" evidence="2">
    <location>
        <begin position="276"/>
        <end position="318"/>
    </location>
</feature>
<feature type="zinc finger region" description="B box-type 1; atypical" evidence="1">
    <location>
        <begin position="5"/>
        <end position="47"/>
    </location>
</feature>
<feature type="zinc finger region" description="B box-type 2; degenerate" evidence="1">
    <location>
        <begin position="48"/>
        <end position="88"/>
    </location>
</feature>
<feature type="binding site" evidence="1">
    <location>
        <position position="5"/>
    </location>
    <ligand>
        <name>Zn(2+)</name>
        <dbReference type="ChEBI" id="CHEBI:29105"/>
    </ligand>
</feature>
<feature type="binding site" evidence="1">
    <location>
        <position position="8"/>
    </location>
    <ligand>
        <name>Zn(2+)</name>
        <dbReference type="ChEBI" id="CHEBI:29105"/>
    </ligand>
</feature>
<feature type="binding site" evidence="1">
    <location>
        <position position="28"/>
    </location>
    <ligand>
        <name>Zn(2+)</name>
        <dbReference type="ChEBI" id="CHEBI:29105"/>
    </ligand>
</feature>
<feature type="binding site" evidence="1">
    <location>
        <position position="33"/>
    </location>
    <ligand>
        <name>Zn(2+)</name>
        <dbReference type="ChEBI" id="CHEBI:29105"/>
    </ligand>
</feature>
<proteinExistence type="evidence at protein level"/>
<name>COL11_ARATH</name>
<organism>
    <name type="scientific">Arabidopsis thaliana</name>
    <name type="common">Mouse-ear cress</name>
    <dbReference type="NCBI Taxonomy" id="3702"/>
    <lineage>
        <taxon>Eukaryota</taxon>
        <taxon>Viridiplantae</taxon>
        <taxon>Streptophyta</taxon>
        <taxon>Embryophyta</taxon>
        <taxon>Tracheophyta</taxon>
        <taxon>Spermatophyta</taxon>
        <taxon>Magnoliopsida</taxon>
        <taxon>eudicotyledons</taxon>
        <taxon>Gunneridae</taxon>
        <taxon>Pentapetalae</taxon>
        <taxon>rosids</taxon>
        <taxon>malvids</taxon>
        <taxon>Brassicales</taxon>
        <taxon>Brassicaceae</taxon>
        <taxon>Camelineae</taxon>
        <taxon>Arabidopsis</taxon>
    </lineage>
</organism>
<accession>O23379</accession>
<reference key="1">
    <citation type="journal article" date="1998" name="Nature">
        <title>Analysis of 1.9 Mb of contiguous sequence from chromosome 4 of Arabidopsis thaliana.</title>
        <authorList>
            <person name="Bevan M."/>
            <person name="Bancroft I."/>
            <person name="Bent E."/>
            <person name="Love K."/>
            <person name="Goodman H.M."/>
            <person name="Dean C."/>
            <person name="Bergkamp R."/>
            <person name="Dirkse W."/>
            <person name="van Staveren M."/>
            <person name="Stiekema W."/>
            <person name="Drost L."/>
            <person name="Ridley P."/>
            <person name="Hudson S.-A."/>
            <person name="Patel K."/>
            <person name="Murphy G."/>
            <person name="Piffanelli P."/>
            <person name="Wedler H."/>
            <person name="Wedler E."/>
            <person name="Wambutt R."/>
            <person name="Weitzenegger T."/>
            <person name="Pohl T."/>
            <person name="Terryn N."/>
            <person name="Gielen J."/>
            <person name="Villarroel R."/>
            <person name="De Clercq R."/>
            <person name="van Montagu M."/>
            <person name="Lecharny A."/>
            <person name="Aubourg S."/>
            <person name="Gy I."/>
            <person name="Kreis M."/>
            <person name="Lao N."/>
            <person name="Kavanagh T."/>
            <person name="Hempel S."/>
            <person name="Kotter P."/>
            <person name="Entian K.-D."/>
            <person name="Rieger M."/>
            <person name="Schaefer M."/>
            <person name="Funk B."/>
            <person name="Mueller-Auer S."/>
            <person name="Silvey M."/>
            <person name="James R."/>
            <person name="Monfort A."/>
            <person name="Pons A."/>
            <person name="Puigdomenech P."/>
            <person name="Douka A."/>
            <person name="Voukelatou E."/>
            <person name="Milioni D."/>
            <person name="Hatzopoulos P."/>
            <person name="Piravandi E."/>
            <person name="Obermaier B."/>
            <person name="Hilbert H."/>
            <person name="Duesterhoeft A."/>
            <person name="Moores T."/>
            <person name="Jones J.D.G."/>
            <person name="Eneva T."/>
            <person name="Palme K."/>
            <person name="Benes V."/>
            <person name="Rechmann S."/>
            <person name="Ansorge W."/>
            <person name="Cooke R."/>
            <person name="Berger C."/>
            <person name="Delseny M."/>
            <person name="Voet M."/>
            <person name="Volckaert G."/>
            <person name="Mewes H.-W."/>
            <person name="Klosterman S."/>
            <person name="Schueller C."/>
            <person name="Chalwatzis N."/>
        </authorList>
    </citation>
    <scope>NUCLEOTIDE SEQUENCE [LARGE SCALE GENOMIC DNA]</scope>
    <source>
        <strain>cv. Columbia</strain>
    </source>
</reference>
<reference key="2">
    <citation type="journal article" date="1999" name="Nature">
        <title>Sequence and analysis of chromosome 4 of the plant Arabidopsis thaliana.</title>
        <authorList>
            <person name="Mayer K.F.X."/>
            <person name="Schueller C."/>
            <person name="Wambutt R."/>
            <person name="Murphy G."/>
            <person name="Volckaert G."/>
            <person name="Pohl T."/>
            <person name="Duesterhoeft A."/>
            <person name="Stiekema W."/>
            <person name="Entian K.-D."/>
            <person name="Terryn N."/>
            <person name="Harris B."/>
            <person name="Ansorge W."/>
            <person name="Brandt P."/>
            <person name="Grivell L.A."/>
            <person name="Rieger M."/>
            <person name="Weichselgartner M."/>
            <person name="de Simone V."/>
            <person name="Obermaier B."/>
            <person name="Mache R."/>
            <person name="Mueller M."/>
            <person name="Kreis M."/>
            <person name="Delseny M."/>
            <person name="Puigdomenech P."/>
            <person name="Watson M."/>
            <person name="Schmidtheini T."/>
            <person name="Reichert B."/>
            <person name="Portetelle D."/>
            <person name="Perez-Alonso M."/>
            <person name="Boutry M."/>
            <person name="Bancroft I."/>
            <person name="Vos P."/>
            <person name="Hoheisel J."/>
            <person name="Zimmermann W."/>
            <person name="Wedler H."/>
            <person name="Ridley P."/>
            <person name="Langham S.-A."/>
            <person name="McCullagh B."/>
            <person name="Bilham L."/>
            <person name="Robben J."/>
            <person name="van der Schueren J."/>
            <person name="Grymonprez B."/>
            <person name="Chuang Y.-J."/>
            <person name="Vandenbussche F."/>
            <person name="Braeken M."/>
            <person name="Weltjens I."/>
            <person name="Voet M."/>
            <person name="Bastiaens I."/>
            <person name="Aert R."/>
            <person name="Defoor E."/>
            <person name="Weitzenegger T."/>
            <person name="Bothe G."/>
            <person name="Ramsperger U."/>
            <person name="Hilbert H."/>
            <person name="Braun M."/>
            <person name="Holzer E."/>
            <person name="Brandt A."/>
            <person name="Peters S."/>
            <person name="van Staveren M."/>
            <person name="Dirkse W."/>
            <person name="Mooijman P."/>
            <person name="Klein Lankhorst R."/>
            <person name="Rose M."/>
            <person name="Hauf J."/>
            <person name="Koetter P."/>
            <person name="Berneiser S."/>
            <person name="Hempel S."/>
            <person name="Feldpausch M."/>
            <person name="Lamberth S."/>
            <person name="Van den Daele H."/>
            <person name="De Keyser A."/>
            <person name="Buysshaert C."/>
            <person name="Gielen J."/>
            <person name="Villarroel R."/>
            <person name="De Clercq R."/>
            <person name="van Montagu M."/>
            <person name="Rogers J."/>
            <person name="Cronin A."/>
            <person name="Quail M.A."/>
            <person name="Bray-Allen S."/>
            <person name="Clark L."/>
            <person name="Doggett J."/>
            <person name="Hall S."/>
            <person name="Kay M."/>
            <person name="Lennard N."/>
            <person name="McLay K."/>
            <person name="Mayes R."/>
            <person name="Pettett A."/>
            <person name="Rajandream M.A."/>
            <person name="Lyne M."/>
            <person name="Benes V."/>
            <person name="Rechmann S."/>
            <person name="Borkova D."/>
            <person name="Bloecker H."/>
            <person name="Scharfe M."/>
            <person name="Grimm M."/>
            <person name="Loehnert T.-H."/>
            <person name="Dose S."/>
            <person name="de Haan M."/>
            <person name="Maarse A.C."/>
            <person name="Schaefer M."/>
            <person name="Mueller-Auer S."/>
            <person name="Gabel C."/>
            <person name="Fuchs M."/>
            <person name="Fartmann B."/>
            <person name="Granderath K."/>
            <person name="Dauner D."/>
            <person name="Herzl A."/>
            <person name="Neumann S."/>
            <person name="Argiriou A."/>
            <person name="Vitale D."/>
            <person name="Liguori R."/>
            <person name="Piravandi E."/>
            <person name="Massenet O."/>
            <person name="Quigley F."/>
            <person name="Clabauld G."/>
            <person name="Muendlein A."/>
            <person name="Felber R."/>
            <person name="Schnabl S."/>
            <person name="Hiller R."/>
            <person name="Schmidt W."/>
            <person name="Lecharny A."/>
            <person name="Aubourg S."/>
            <person name="Chefdor F."/>
            <person name="Cooke R."/>
            <person name="Berger C."/>
            <person name="Monfort A."/>
            <person name="Casacuberta E."/>
            <person name="Gibbons T."/>
            <person name="Weber N."/>
            <person name="Vandenbol M."/>
            <person name="Bargues M."/>
            <person name="Terol J."/>
            <person name="Torres A."/>
            <person name="Perez-Perez A."/>
            <person name="Purnelle B."/>
            <person name="Bent E."/>
            <person name="Johnson S."/>
            <person name="Tacon D."/>
            <person name="Jesse T."/>
            <person name="Heijnen L."/>
            <person name="Schwarz S."/>
            <person name="Scholler P."/>
            <person name="Heber S."/>
            <person name="Francs P."/>
            <person name="Bielke C."/>
            <person name="Frishman D."/>
            <person name="Haase D."/>
            <person name="Lemcke K."/>
            <person name="Mewes H.-W."/>
            <person name="Stocker S."/>
            <person name="Zaccaria P."/>
            <person name="Bevan M."/>
            <person name="Wilson R.K."/>
            <person name="de la Bastide M."/>
            <person name="Habermann K."/>
            <person name="Parnell L."/>
            <person name="Dedhia N."/>
            <person name="Gnoj L."/>
            <person name="Schutz K."/>
            <person name="Huang E."/>
            <person name="Spiegel L."/>
            <person name="Sekhon M."/>
            <person name="Murray J."/>
            <person name="Sheet P."/>
            <person name="Cordes M."/>
            <person name="Abu-Threideh J."/>
            <person name="Stoneking T."/>
            <person name="Kalicki J."/>
            <person name="Graves T."/>
            <person name="Harmon G."/>
            <person name="Edwards J."/>
            <person name="Latreille P."/>
            <person name="Courtney L."/>
            <person name="Cloud J."/>
            <person name="Abbott A."/>
            <person name="Scott K."/>
            <person name="Johnson D."/>
            <person name="Minx P."/>
            <person name="Bentley D."/>
            <person name="Fulton B."/>
            <person name="Miller N."/>
            <person name="Greco T."/>
            <person name="Kemp K."/>
            <person name="Kramer J."/>
            <person name="Fulton L."/>
            <person name="Mardis E."/>
            <person name="Dante M."/>
            <person name="Pepin K."/>
            <person name="Hillier L.W."/>
            <person name="Nelson J."/>
            <person name="Spieth J."/>
            <person name="Ryan E."/>
            <person name="Andrews S."/>
            <person name="Geisel C."/>
            <person name="Layman D."/>
            <person name="Du H."/>
            <person name="Ali J."/>
            <person name="Berghoff A."/>
            <person name="Jones K."/>
            <person name="Drone K."/>
            <person name="Cotton M."/>
            <person name="Joshu C."/>
            <person name="Antonoiu B."/>
            <person name="Zidanic M."/>
            <person name="Strong C."/>
            <person name="Sun H."/>
            <person name="Lamar B."/>
            <person name="Yordan C."/>
            <person name="Ma P."/>
            <person name="Zhong J."/>
            <person name="Preston R."/>
            <person name="Vil D."/>
            <person name="Shekher M."/>
            <person name="Matero A."/>
            <person name="Shah R."/>
            <person name="Swaby I.K."/>
            <person name="O'Shaughnessy A."/>
            <person name="Rodriguez M."/>
            <person name="Hoffman J."/>
            <person name="Till S."/>
            <person name="Granat S."/>
            <person name="Shohdy N."/>
            <person name="Hasegawa A."/>
            <person name="Hameed A."/>
            <person name="Lodhi M."/>
            <person name="Johnson A."/>
            <person name="Chen E."/>
            <person name="Marra M.A."/>
            <person name="Martienssen R."/>
            <person name="McCombie W.R."/>
        </authorList>
    </citation>
    <scope>NUCLEOTIDE SEQUENCE [LARGE SCALE GENOMIC DNA]</scope>
    <source>
        <strain>cv. Columbia</strain>
    </source>
</reference>
<reference key="3">
    <citation type="journal article" date="2017" name="Plant J.">
        <title>Araport11: a complete reannotation of the Arabidopsis thaliana reference genome.</title>
        <authorList>
            <person name="Cheng C.Y."/>
            <person name="Krishnakumar V."/>
            <person name="Chan A.P."/>
            <person name="Thibaud-Nissen F."/>
            <person name="Schobel S."/>
            <person name="Town C.D."/>
        </authorList>
    </citation>
    <scope>GENOME REANNOTATION</scope>
    <source>
        <strain>cv. Columbia</strain>
    </source>
</reference>
<reference key="4">
    <citation type="journal article" date="2003" name="Plant Physiol.">
        <title>The evolution of CONSTANS-like gene families in barley, rice, and Arabidopsis.</title>
        <authorList>
            <person name="Griffiths S."/>
            <person name="Dunford R.P."/>
            <person name="Coupland G."/>
            <person name="Laurie D.A."/>
        </authorList>
    </citation>
    <scope>GENE FAMILY</scope>
    <scope>NOMENCLATURE</scope>
</reference>